<feature type="chain" id="PRO_1000214441" description="Large ribosomal subunit protein uL2">
    <location>
        <begin position="1"/>
        <end position="277"/>
    </location>
</feature>
<feature type="region of interest" description="Disordered" evidence="2">
    <location>
        <begin position="1"/>
        <end position="20"/>
    </location>
</feature>
<feature type="region of interest" description="Disordered" evidence="2">
    <location>
        <begin position="210"/>
        <end position="277"/>
    </location>
</feature>
<feature type="compositionally biased region" description="Basic residues" evidence="2">
    <location>
        <begin position="210"/>
        <end position="221"/>
    </location>
</feature>
<keyword id="KW-1185">Reference proteome</keyword>
<keyword id="KW-0687">Ribonucleoprotein</keyword>
<keyword id="KW-0689">Ribosomal protein</keyword>
<keyword id="KW-0694">RNA-binding</keyword>
<keyword id="KW-0699">rRNA-binding</keyword>
<reference key="1">
    <citation type="journal article" date="2009" name="PLoS Genet.">
        <title>Alliance of proteomics and genomics to unravel the specificities of Sahara bacterium Deinococcus deserti.</title>
        <authorList>
            <person name="de Groot A."/>
            <person name="Dulermo R."/>
            <person name="Ortet P."/>
            <person name="Blanchard L."/>
            <person name="Guerin P."/>
            <person name="Fernandez B."/>
            <person name="Vacherie B."/>
            <person name="Dossat C."/>
            <person name="Jolivet E."/>
            <person name="Siguier P."/>
            <person name="Chandler M."/>
            <person name="Barakat M."/>
            <person name="Dedieu A."/>
            <person name="Barbe V."/>
            <person name="Heulin T."/>
            <person name="Sommer S."/>
            <person name="Achouak W."/>
            <person name="Armengaud J."/>
        </authorList>
    </citation>
    <scope>NUCLEOTIDE SEQUENCE [LARGE SCALE GENOMIC DNA]</scope>
    <source>
        <strain>DSM 17065 / CIP 109153 / LMG 22923 / VCD115</strain>
    </source>
</reference>
<dbReference type="EMBL" id="CP001114">
    <property type="protein sequence ID" value="ACO46880.1"/>
    <property type="molecule type" value="Genomic_DNA"/>
</dbReference>
<dbReference type="RefSeq" id="WP_012694002.1">
    <property type="nucleotide sequence ID" value="NC_012526.1"/>
</dbReference>
<dbReference type="SMR" id="C1CXG3"/>
<dbReference type="STRING" id="546414.Deide_18920"/>
<dbReference type="PaxDb" id="546414-Deide_18920"/>
<dbReference type="KEGG" id="ddr:Deide_18920"/>
<dbReference type="eggNOG" id="COG0090">
    <property type="taxonomic scope" value="Bacteria"/>
</dbReference>
<dbReference type="HOGENOM" id="CLU_036235_2_1_0"/>
<dbReference type="OrthoDB" id="9778722at2"/>
<dbReference type="Proteomes" id="UP000002208">
    <property type="component" value="Chromosome"/>
</dbReference>
<dbReference type="GO" id="GO:0015934">
    <property type="term" value="C:large ribosomal subunit"/>
    <property type="evidence" value="ECO:0007669"/>
    <property type="project" value="InterPro"/>
</dbReference>
<dbReference type="GO" id="GO:0019843">
    <property type="term" value="F:rRNA binding"/>
    <property type="evidence" value="ECO:0007669"/>
    <property type="project" value="UniProtKB-UniRule"/>
</dbReference>
<dbReference type="GO" id="GO:0003735">
    <property type="term" value="F:structural constituent of ribosome"/>
    <property type="evidence" value="ECO:0007669"/>
    <property type="project" value="InterPro"/>
</dbReference>
<dbReference type="GO" id="GO:0016740">
    <property type="term" value="F:transferase activity"/>
    <property type="evidence" value="ECO:0007669"/>
    <property type="project" value="InterPro"/>
</dbReference>
<dbReference type="GO" id="GO:0002181">
    <property type="term" value="P:cytoplasmic translation"/>
    <property type="evidence" value="ECO:0007669"/>
    <property type="project" value="TreeGrafter"/>
</dbReference>
<dbReference type="FunFam" id="2.30.30.30:FF:000001">
    <property type="entry name" value="50S ribosomal protein L2"/>
    <property type="match status" value="1"/>
</dbReference>
<dbReference type="FunFam" id="2.40.50.140:FF:000003">
    <property type="entry name" value="50S ribosomal protein L2"/>
    <property type="match status" value="1"/>
</dbReference>
<dbReference type="FunFam" id="4.10.950.10:FF:000001">
    <property type="entry name" value="50S ribosomal protein L2"/>
    <property type="match status" value="1"/>
</dbReference>
<dbReference type="Gene3D" id="2.30.30.30">
    <property type="match status" value="1"/>
</dbReference>
<dbReference type="Gene3D" id="2.40.50.140">
    <property type="entry name" value="Nucleic acid-binding proteins"/>
    <property type="match status" value="1"/>
</dbReference>
<dbReference type="Gene3D" id="4.10.950.10">
    <property type="entry name" value="Ribosomal protein L2, domain 3"/>
    <property type="match status" value="1"/>
</dbReference>
<dbReference type="HAMAP" id="MF_01320_B">
    <property type="entry name" value="Ribosomal_uL2_B"/>
    <property type="match status" value="1"/>
</dbReference>
<dbReference type="InterPro" id="IPR012340">
    <property type="entry name" value="NA-bd_OB-fold"/>
</dbReference>
<dbReference type="InterPro" id="IPR014722">
    <property type="entry name" value="Rib_uL2_dom2"/>
</dbReference>
<dbReference type="InterPro" id="IPR002171">
    <property type="entry name" value="Ribosomal_uL2"/>
</dbReference>
<dbReference type="InterPro" id="IPR005880">
    <property type="entry name" value="Ribosomal_uL2_bac/org-type"/>
</dbReference>
<dbReference type="InterPro" id="IPR022669">
    <property type="entry name" value="Ribosomal_uL2_C"/>
</dbReference>
<dbReference type="InterPro" id="IPR022671">
    <property type="entry name" value="Ribosomal_uL2_CS"/>
</dbReference>
<dbReference type="InterPro" id="IPR014726">
    <property type="entry name" value="Ribosomal_uL2_dom3"/>
</dbReference>
<dbReference type="InterPro" id="IPR022666">
    <property type="entry name" value="Ribosomal_uL2_RNA-bd_dom"/>
</dbReference>
<dbReference type="InterPro" id="IPR008991">
    <property type="entry name" value="Translation_prot_SH3-like_sf"/>
</dbReference>
<dbReference type="NCBIfam" id="TIGR01171">
    <property type="entry name" value="rplB_bact"/>
    <property type="match status" value="1"/>
</dbReference>
<dbReference type="PANTHER" id="PTHR13691:SF5">
    <property type="entry name" value="LARGE RIBOSOMAL SUBUNIT PROTEIN UL2M"/>
    <property type="match status" value="1"/>
</dbReference>
<dbReference type="PANTHER" id="PTHR13691">
    <property type="entry name" value="RIBOSOMAL PROTEIN L2"/>
    <property type="match status" value="1"/>
</dbReference>
<dbReference type="Pfam" id="PF00181">
    <property type="entry name" value="Ribosomal_L2"/>
    <property type="match status" value="1"/>
</dbReference>
<dbReference type="Pfam" id="PF03947">
    <property type="entry name" value="Ribosomal_L2_C"/>
    <property type="match status" value="1"/>
</dbReference>
<dbReference type="PIRSF" id="PIRSF002158">
    <property type="entry name" value="Ribosomal_L2"/>
    <property type="match status" value="1"/>
</dbReference>
<dbReference type="SMART" id="SM01383">
    <property type="entry name" value="Ribosomal_L2"/>
    <property type="match status" value="1"/>
</dbReference>
<dbReference type="SMART" id="SM01382">
    <property type="entry name" value="Ribosomal_L2_C"/>
    <property type="match status" value="1"/>
</dbReference>
<dbReference type="SUPFAM" id="SSF50249">
    <property type="entry name" value="Nucleic acid-binding proteins"/>
    <property type="match status" value="1"/>
</dbReference>
<dbReference type="SUPFAM" id="SSF50104">
    <property type="entry name" value="Translation proteins SH3-like domain"/>
    <property type="match status" value="1"/>
</dbReference>
<dbReference type="PROSITE" id="PS00467">
    <property type="entry name" value="RIBOSOMAL_L2"/>
    <property type="match status" value="1"/>
</dbReference>
<name>RL2_DEIDV</name>
<gene>
    <name evidence="1" type="primary">rplB</name>
    <name type="ordered locus">Deide_18920</name>
</gene>
<accession>C1CXG3</accession>
<evidence type="ECO:0000255" key="1">
    <source>
        <dbReference type="HAMAP-Rule" id="MF_01320"/>
    </source>
</evidence>
<evidence type="ECO:0000256" key="2">
    <source>
        <dbReference type="SAM" id="MobiDB-lite"/>
    </source>
</evidence>
<evidence type="ECO:0000305" key="3"/>
<protein>
    <recommendedName>
        <fullName evidence="1">Large ribosomal subunit protein uL2</fullName>
    </recommendedName>
    <alternativeName>
        <fullName evidence="3">50S ribosomal protein L2</fullName>
    </alternativeName>
</protein>
<proteinExistence type="inferred from homology"/>
<comment type="function">
    <text evidence="1">One of the primary rRNA binding proteins. Required for association of the 30S and 50S subunits to form the 70S ribosome, for tRNA binding and peptide bond formation. It has been suggested to have peptidyltransferase activity; this is somewhat controversial. Makes several contacts with the 16S rRNA in the 70S ribosome.</text>
</comment>
<comment type="subunit">
    <text evidence="1">Part of the 50S ribosomal subunit. Forms a bridge to the 30S subunit in the 70S ribosome.</text>
</comment>
<comment type="similarity">
    <text evidence="1">Belongs to the universal ribosomal protein uL2 family.</text>
</comment>
<organism>
    <name type="scientific">Deinococcus deserti (strain DSM 17065 / CIP 109153 / LMG 22923 / VCD115)</name>
    <dbReference type="NCBI Taxonomy" id="546414"/>
    <lineage>
        <taxon>Bacteria</taxon>
        <taxon>Thermotogati</taxon>
        <taxon>Deinococcota</taxon>
        <taxon>Deinococci</taxon>
        <taxon>Deinococcales</taxon>
        <taxon>Deinococcaceae</taxon>
        <taxon>Deinococcus</taxon>
    </lineage>
</organism>
<sequence length="277" mass="30300">MAVKKYRPYTPSRRQMTTADFSGLTKKRPEKALTEALPKTGGRNNRGRITSRFIGGGHKRLYRIIDFKRRDKSGVSARVAAIEYDPNRSARIALLHFADGEKRYILAPEGLQVGATINTGPEAEPKLGNALPLRFIPVGAVVHALELVPGKGAQLARSAGTSVQVQGKESEYVIVRLPSGELRRIHTECYATIGAVGNAEHKNINLGKAGRSRWLGRKPHQRGSAMNPVDHPHGGGEGRTGAGRQPVSPWGQLAKGLKTRRKRKNSDRFIVTRRGGK</sequence>